<gene>
    <name type="primary">vangl2-b</name>
    <name type="synonym">stbm-a</name>
</gene>
<organism>
    <name type="scientific">Xenopus laevis</name>
    <name type="common">African clawed frog</name>
    <dbReference type="NCBI Taxonomy" id="8355"/>
    <lineage>
        <taxon>Eukaryota</taxon>
        <taxon>Metazoa</taxon>
        <taxon>Chordata</taxon>
        <taxon>Craniata</taxon>
        <taxon>Vertebrata</taxon>
        <taxon>Euteleostomi</taxon>
        <taxon>Amphibia</taxon>
        <taxon>Batrachia</taxon>
        <taxon>Anura</taxon>
        <taxon>Pipoidea</taxon>
        <taxon>Pipidae</taxon>
        <taxon>Xenopodinae</taxon>
        <taxon>Xenopus</taxon>
        <taxon>Xenopus</taxon>
    </lineage>
</organism>
<protein>
    <recommendedName>
        <fullName>Vang-like protein 2-B</fullName>
    </recommendedName>
    <alternativeName>
        <fullName>Protein strabismus-B</fullName>
    </alternativeName>
    <alternativeName>
        <fullName>Van Gogh-like protein 2-B</fullName>
    </alternativeName>
    <alternativeName>
        <fullName>Xstrabismus-B</fullName>
        <shortName>Xstbm-B</shortName>
    </alternativeName>
</protein>
<dbReference type="EMBL" id="AF387816">
    <property type="protein sequence ID" value="AAK70879.1"/>
    <property type="molecule type" value="mRNA"/>
</dbReference>
<dbReference type="EMBL" id="BC099002">
    <property type="protein sequence ID" value="AAH99002.1"/>
    <property type="molecule type" value="mRNA"/>
</dbReference>
<dbReference type="RefSeq" id="NP_001083892.1">
    <property type="nucleotide sequence ID" value="NM_001090423.1"/>
</dbReference>
<dbReference type="SMR" id="Q90Z05"/>
<dbReference type="DNASU" id="399177"/>
<dbReference type="GeneID" id="399177"/>
<dbReference type="KEGG" id="xla:399177"/>
<dbReference type="AGR" id="Xenbase:XB-GENE-973465"/>
<dbReference type="CTD" id="399177"/>
<dbReference type="Xenbase" id="XB-GENE-973465">
    <property type="gene designation" value="vangl2.S"/>
</dbReference>
<dbReference type="OMA" id="DWHSISH"/>
<dbReference type="OrthoDB" id="8887313at2759"/>
<dbReference type="Proteomes" id="UP000186698">
    <property type="component" value="Chromosome 8S"/>
</dbReference>
<dbReference type="Bgee" id="399177">
    <property type="expression patterns" value="Expressed in egg cell and 19 other cell types or tissues"/>
</dbReference>
<dbReference type="GO" id="GO:0005886">
    <property type="term" value="C:plasma membrane"/>
    <property type="evidence" value="ECO:0000250"/>
    <property type="project" value="UniProtKB"/>
</dbReference>
<dbReference type="GO" id="GO:0060027">
    <property type="term" value="P:convergent extension involved in gastrulation"/>
    <property type="evidence" value="ECO:0000315"/>
    <property type="project" value="UniProtKB"/>
</dbReference>
<dbReference type="GO" id="GO:0001736">
    <property type="term" value="P:establishment of planar polarity"/>
    <property type="evidence" value="ECO:0000315"/>
    <property type="project" value="UniProtKB"/>
</dbReference>
<dbReference type="GO" id="GO:0090090">
    <property type="term" value="P:negative regulation of canonical Wnt signaling pathway"/>
    <property type="evidence" value="ECO:0000250"/>
    <property type="project" value="UniProtKB"/>
</dbReference>
<dbReference type="GO" id="GO:0007399">
    <property type="term" value="P:nervous system development"/>
    <property type="evidence" value="ECO:0000315"/>
    <property type="project" value="UniProtKB"/>
</dbReference>
<dbReference type="GO" id="GO:0060071">
    <property type="term" value="P:Wnt signaling pathway, planar cell polarity pathway"/>
    <property type="evidence" value="ECO:0000318"/>
    <property type="project" value="GO_Central"/>
</dbReference>
<dbReference type="InterPro" id="IPR009539">
    <property type="entry name" value="VANGL"/>
</dbReference>
<dbReference type="PANTHER" id="PTHR20886">
    <property type="entry name" value="VANG-LIKE PROTEIN"/>
    <property type="match status" value="1"/>
</dbReference>
<dbReference type="Pfam" id="PF06638">
    <property type="entry name" value="Strabismus"/>
    <property type="match status" value="1"/>
</dbReference>
<dbReference type="PIRSF" id="PIRSF007991">
    <property type="entry name" value="Strabismus"/>
    <property type="match status" value="1"/>
</dbReference>
<comment type="function">
    <text evidence="1 2 5 6">Has a role in non-canonical Wnt/planar cell polarity (PCP) signaling; can recruit dvl/dsh and prickle from the cytoplasm to the plasma membrane. Acts in a PCP complex to regulate the polarized assembly of fibronectrin on the surface of the mesoderm during gastrulation. Regulates convergent extension in both dorsal mesoderm and neural tissue without affecting cell fate. Regulates neural fold closure during neurulation (PubMed:12074560, PubMed:15854914). May be required for cell surface localization of fzd3 and fzd6 in the inner ear (By similarity).</text>
</comment>
<comment type="subunit">
    <text evidence="1 7 8">Interacts with dvl/dsh (By similarity). Interacts with prickle3 (PubMed:26079437, PubMed:27658614).</text>
</comment>
<comment type="subcellular location">
    <subcellularLocation>
        <location evidence="1">Cell membrane</location>
        <topology evidence="1">Multi-pass membrane protein</topology>
    </subcellularLocation>
    <text evidence="1">Cell membrane localization is regulated by prickle.</text>
</comment>
<comment type="tissue specificity">
    <text evidence="5">During gastrulation, broadly expressed in the dorsal region in both mesodermal and neural tissues. From the neurula stages, expressed throughout the neural tube. In tailbud stages, expression declines in the anterior notochord but remains strong in the posterior notochord and in the neural tube. Also weakly expressed in the prenephritic region of late tailbud embryos.</text>
</comment>
<comment type="developmental stage">
    <text evidence="5">Expressed both maternally and zygotically throughout early development. Maternal expression declines gradually by the early gastrula stage (stage 10). Zygotic expression increases by late gastrula stage (stage 12) with strong expression from the midneurula stage (stage 15) onward.</text>
</comment>
<comment type="similarity">
    <text evidence="3">Belongs to the Vang family.</text>
</comment>
<name>VNG2B_XENLA</name>
<keyword id="KW-1003">Cell membrane</keyword>
<keyword id="KW-0217">Developmental protein</keyword>
<keyword id="KW-0306">Gastrulation</keyword>
<keyword id="KW-0472">Membrane</keyword>
<keyword id="KW-1185">Reference proteome</keyword>
<keyword id="KW-0812">Transmembrane</keyword>
<keyword id="KW-1133">Transmembrane helix</keyword>
<keyword id="KW-0879">Wnt signaling pathway</keyword>
<accession>Q90Z05</accession>
<proteinExistence type="evidence at protein level"/>
<reference evidence="9 11" key="1">
    <citation type="journal article" date="2002" name="Dev. Biol.">
        <title>The planar cell polarity gene strabismus regulates convergence and extension and neural fold closure in Xenopus.</title>
        <authorList>
            <person name="Goto T."/>
            <person name="Keller R."/>
        </authorList>
    </citation>
    <scope>NUCLEOTIDE SEQUENCE [MRNA]</scope>
    <scope>FUNCTION</scope>
    <scope>TISSUE SPECIFICITY</scope>
    <scope>DEVELOPMENTAL STAGE</scope>
    <scope>MUTAGENESIS OF 500-SER--VAL-521</scope>
    <source>
        <tissue evidence="5">Gastrula</tissue>
    </source>
</reference>
<reference evidence="10" key="2">
    <citation type="submission" date="2005-07" db="EMBL/GenBank/DDBJ databases">
        <authorList>
            <consortium name="NIH - Xenopus Gene Collection (XGC) project"/>
        </authorList>
    </citation>
    <scope>NUCLEOTIDE SEQUENCE [LARGE SCALE MRNA]</scope>
    <source>
        <tissue evidence="10">Egg</tissue>
    </source>
</reference>
<reference evidence="9" key="3">
    <citation type="journal article" date="2005" name="Curr. Biol.">
        <title>Planar cell polarity genes regulate polarized extracellular matrix deposition during frog gastrulation.</title>
        <authorList>
            <person name="Goto T."/>
            <person name="Davidson L."/>
            <person name="Asashima M."/>
            <person name="Keller R."/>
        </authorList>
    </citation>
    <scope>FUNCTION</scope>
</reference>
<reference key="4">
    <citation type="journal article" date="2015" name="Dev. Biol.">
        <title>The involvement of PCP proteins in radial cell intercalations during Xenopus embryonic development.</title>
        <authorList>
            <person name="Ossipova O."/>
            <person name="Chu C.W."/>
            <person name="Fillatre J."/>
            <person name="Brott B.K."/>
            <person name="Itoh K."/>
            <person name="Sokol S.Y."/>
        </authorList>
    </citation>
    <scope>INTERACTION WITH PRICKLE3</scope>
</reference>
<reference key="5">
    <citation type="journal article" date="2016" name="Elife">
        <title>Wnt proteins can direct planar cell polarity in vertebrate ectoderm.</title>
        <authorList>
            <person name="Chu C.W."/>
            <person name="Sokol S.Y."/>
        </authorList>
    </citation>
    <scope>INTERACTION WITH PRICKLE3</scope>
</reference>
<feature type="chain" id="PRO_0000282965" description="Vang-like protein 2-B">
    <location>
        <begin position="1"/>
        <end position="521"/>
    </location>
</feature>
<feature type="topological domain" description="Cytoplasmic" evidence="3">
    <location>
        <begin position="1"/>
        <end position="108"/>
    </location>
</feature>
<feature type="transmembrane region" description="Helical; Name=1" evidence="3">
    <location>
        <begin position="109"/>
        <end position="129"/>
    </location>
</feature>
<feature type="topological domain" description="Extracellular" evidence="3">
    <location>
        <begin position="130"/>
        <end position="147"/>
    </location>
</feature>
<feature type="transmembrane region" description="Helical; Name=2" evidence="3">
    <location>
        <begin position="148"/>
        <end position="168"/>
    </location>
</feature>
<feature type="topological domain" description="Cytoplasmic" evidence="3">
    <location>
        <begin position="169"/>
        <end position="178"/>
    </location>
</feature>
<feature type="transmembrane region" description="Helical; Name=3" evidence="3">
    <location>
        <begin position="179"/>
        <end position="199"/>
    </location>
</feature>
<feature type="topological domain" description="Extracellular" evidence="3">
    <location>
        <begin position="200"/>
        <end position="218"/>
    </location>
</feature>
<feature type="transmembrane region" description="Helical; Name=4" evidence="3">
    <location>
        <begin position="219"/>
        <end position="239"/>
    </location>
</feature>
<feature type="topological domain" description="Cytoplasmic" evidence="3">
    <location>
        <begin position="240"/>
        <end position="521"/>
    </location>
</feature>
<feature type="region of interest" description="Disordered" evidence="4">
    <location>
        <begin position="1"/>
        <end position="73"/>
    </location>
</feature>
<feature type="short sequence motif" description="PDZ-binding" evidence="3">
    <location>
        <begin position="518"/>
        <end position="521"/>
    </location>
</feature>
<feature type="compositionally biased region" description="Low complexity" evidence="4">
    <location>
        <begin position="1"/>
        <end position="18"/>
    </location>
</feature>
<feature type="compositionally biased region" description="Basic residues" evidence="4">
    <location>
        <begin position="19"/>
        <end position="33"/>
    </location>
</feature>
<feature type="compositionally biased region" description="Basic and acidic residues" evidence="4">
    <location>
        <begin position="57"/>
        <end position="67"/>
    </location>
</feature>
<feature type="mutagenesis site" description="Dominant negative that inhibits vangl2-B function." evidence="5">
    <location>
        <begin position="500"/>
        <end position="521"/>
    </location>
</feature>
<evidence type="ECO:0000250" key="1">
    <source>
        <dbReference type="UniProtKB" id="Q90X64"/>
    </source>
</evidence>
<evidence type="ECO:0000250" key="2">
    <source>
        <dbReference type="UniProtKB" id="Q91ZD4"/>
    </source>
</evidence>
<evidence type="ECO:0000255" key="3"/>
<evidence type="ECO:0000256" key="4">
    <source>
        <dbReference type="SAM" id="MobiDB-lite"/>
    </source>
</evidence>
<evidence type="ECO:0000269" key="5">
    <source>
    </source>
</evidence>
<evidence type="ECO:0000269" key="6">
    <source>
    </source>
</evidence>
<evidence type="ECO:0000269" key="7">
    <source>
    </source>
</evidence>
<evidence type="ECO:0000269" key="8">
    <source>
    </source>
</evidence>
<evidence type="ECO:0000305" key="9"/>
<evidence type="ECO:0000312" key="10">
    <source>
        <dbReference type="EMBL" id="AAH99002.1"/>
    </source>
</evidence>
<evidence type="ECO:0000312" key="11">
    <source>
        <dbReference type="EMBL" id="AAK70879.1"/>
    </source>
</evidence>
<sequence>MDNDSQYSGYSYKSGQSRSSRKHRDRRERHRSKSREGSRGDKSVTIQAPGEPLLDNESTRGEDRDDNWGETTTVVTGTSEHSISHDDITRITKDMEDSAKLDCSRHLGVVIAGALALLSFLTPIAFMLLPQILWREDLEQCGTACEGLFISVAFKLLILLLGSWALFFRRPKAFFPRVFVFRALLMVLVFLLVVSYWLFYGVRILESRDKNYQGIVQYAVSLVDALLFVHYLAVVLLELRQLQPQFTIKVVRSTDGASRFYNIGHLSIQRVAVWILENYYHDFPVYNPALLNLPKSILSKKMSGFKVYSLGEENNTNNSTGQSRAVIAAAARRRDNSHNEYYYEEAEHERRVRKRKARLVVAVEEAFTHIKRLQDEDPKNPREIMDPREAAQAIFASMARAMQKYLRTTKQQPYHTMESILQHLEFCITHDMTPKAFLERYLGPGPTIQYHKDRWLAKQWTLVSEEPVTNGLKDGVVFELKRQDFSLVVSTKKIPFFKLSEEFVDPKSHKFVMRLQSETSV</sequence>